<dbReference type="EC" id="1.-.-.-"/>
<dbReference type="EMBL" id="CU329672">
    <property type="protein sequence ID" value="CAA20369.1"/>
    <property type="molecule type" value="Genomic_DNA"/>
</dbReference>
<dbReference type="PIR" id="T41540">
    <property type="entry name" value="T41540"/>
</dbReference>
<dbReference type="RefSeq" id="NP_588270.1">
    <property type="nucleotide sequence ID" value="NM_001023260.2"/>
</dbReference>
<dbReference type="SMR" id="Q7Z9I2"/>
<dbReference type="BioGRID" id="275625">
    <property type="interactions" value="11"/>
</dbReference>
<dbReference type="FunCoup" id="Q7Z9I2">
    <property type="interactions" value="109"/>
</dbReference>
<dbReference type="STRING" id="284812.Q7Z9I2"/>
<dbReference type="iPTMnet" id="Q7Z9I2"/>
<dbReference type="PaxDb" id="4896-SPCC663.09c.1"/>
<dbReference type="EnsemblFungi" id="SPCC663.09c.1">
    <property type="protein sequence ID" value="SPCC663.09c.1:pep"/>
    <property type="gene ID" value="SPCC663.09c"/>
</dbReference>
<dbReference type="KEGG" id="spo:2539052"/>
<dbReference type="PomBase" id="SPCC663.09c"/>
<dbReference type="VEuPathDB" id="FungiDB:SPCC663.09c"/>
<dbReference type="eggNOG" id="KOG1611">
    <property type="taxonomic scope" value="Eukaryota"/>
</dbReference>
<dbReference type="HOGENOM" id="CLU_010194_9_1_1"/>
<dbReference type="InParanoid" id="Q7Z9I2"/>
<dbReference type="OMA" id="SVCIHPG"/>
<dbReference type="PhylomeDB" id="Q7Z9I2"/>
<dbReference type="PRO" id="PR:Q7Z9I2"/>
<dbReference type="Proteomes" id="UP000002485">
    <property type="component" value="Chromosome III"/>
</dbReference>
<dbReference type="GO" id="GO:0005737">
    <property type="term" value="C:cytoplasm"/>
    <property type="evidence" value="ECO:0000318"/>
    <property type="project" value="GO_Central"/>
</dbReference>
<dbReference type="GO" id="GO:0005829">
    <property type="term" value="C:cytosol"/>
    <property type="evidence" value="ECO:0007005"/>
    <property type="project" value="PomBase"/>
</dbReference>
<dbReference type="GO" id="GO:0005634">
    <property type="term" value="C:nucleus"/>
    <property type="evidence" value="ECO:0007005"/>
    <property type="project" value="PomBase"/>
</dbReference>
<dbReference type="GO" id="GO:0004022">
    <property type="term" value="F:alcohol dehydrogenase (NAD+) activity"/>
    <property type="evidence" value="ECO:0000266"/>
    <property type="project" value="PomBase"/>
</dbReference>
<dbReference type="GO" id="GO:0016491">
    <property type="term" value="F:oxidoreductase activity"/>
    <property type="evidence" value="ECO:0000318"/>
    <property type="project" value="GO_Central"/>
</dbReference>
<dbReference type="GO" id="GO:0110095">
    <property type="term" value="P:cellular detoxification of aldehyde"/>
    <property type="evidence" value="ECO:0000250"/>
    <property type="project" value="PomBase"/>
</dbReference>
<dbReference type="CDD" id="cd05325">
    <property type="entry name" value="carb_red_sniffer_like_SDR_c"/>
    <property type="match status" value="1"/>
</dbReference>
<dbReference type="FunFam" id="3.40.50.720:FF:000599">
    <property type="entry name" value="Uncharacterized oxidoreductase C663.06c"/>
    <property type="match status" value="1"/>
</dbReference>
<dbReference type="Gene3D" id="3.40.50.720">
    <property type="entry name" value="NAD(P)-binding Rossmann-like Domain"/>
    <property type="match status" value="1"/>
</dbReference>
<dbReference type="InterPro" id="IPR051468">
    <property type="entry name" value="Fungal_SecMetab_SDRs"/>
</dbReference>
<dbReference type="InterPro" id="IPR036291">
    <property type="entry name" value="NAD(P)-bd_dom_sf"/>
</dbReference>
<dbReference type="InterPro" id="IPR002347">
    <property type="entry name" value="SDR_fam"/>
</dbReference>
<dbReference type="PANTHER" id="PTHR43544:SF7">
    <property type="entry name" value="NADB-LER2"/>
    <property type="match status" value="1"/>
</dbReference>
<dbReference type="PANTHER" id="PTHR43544">
    <property type="entry name" value="SHORT-CHAIN DEHYDROGENASE/REDUCTASE"/>
    <property type="match status" value="1"/>
</dbReference>
<dbReference type="Pfam" id="PF00106">
    <property type="entry name" value="adh_short"/>
    <property type="match status" value="1"/>
</dbReference>
<dbReference type="PRINTS" id="PR00081">
    <property type="entry name" value="GDHRDH"/>
</dbReference>
<dbReference type="SUPFAM" id="SSF51735">
    <property type="entry name" value="NAD(P)-binding Rossmann-fold domains"/>
    <property type="match status" value="1"/>
</dbReference>
<accession>Q7Z9I2</accession>
<name>YCP9_SCHPO</name>
<feature type="chain" id="PRO_0000374029" description="Uncharacterized oxidoreductase C663.09c">
    <location>
        <begin position="1"/>
        <end position="253"/>
    </location>
</feature>
<feature type="active site" description="Proton acceptor" evidence="1">
    <location>
        <position position="158"/>
    </location>
</feature>
<feature type="active site" description="Lowers pKa of active site Tyr" evidence="3">
    <location>
        <position position="162"/>
    </location>
</feature>
<feature type="binding site" evidence="2">
    <location>
        <position position="17"/>
    </location>
    <ligand>
        <name>NADP(+)</name>
        <dbReference type="ChEBI" id="CHEBI:58349"/>
    </ligand>
</feature>
<feature type="binding site" evidence="2">
    <location>
        <position position="36"/>
    </location>
    <ligand>
        <name>NADP(+)</name>
        <dbReference type="ChEBI" id="CHEBI:58349"/>
    </ligand>
</feature>
<feature type="binding site" evidence="2">
    <location>
        <position position="62"/>
    </location>
    <ligand>
        <name>NADP(+)</name>
        <dbReference type="ChEBI" id="CHEBI:58349"/>
    </ligand>
</feature>
<feature type="binding site" evidence="3">
    <location>
        <position position="89"/>
    </location>
    <ligand>
        <name>NADP(+)</name>
        <dbReference type="ChEBI" id="CHEBI:58349"/>
    </ligand>
</feature>
<feature type="binding site" evidence="2">
    <location>
        <position position="123"/>
    </location>
    <ligand>
        <name>NADP(+)</name>
        <dbReference type="ChEBI" id="CHEBI:58349"/>
    </ligand>
</feature>
<feature type="binding site" evidence="3">
    <location>
        <position position="158"/>
    </location>
    <ligand>
        <name>NADP(+)</name>
        <dbReference type="ChEBI" id="CHEBI:58349"/>
    </ligand>
</feature>
<feature type="binding site" evidence="3">
    <location>
        <position position="162"/>
    </location>
    <ligand>
        <name>NADP(+)</name>
        <dbReference type="ChEBI" id="CHEBI:58349"/>
    </ligand>
</feature>
<feature type="binding site" evidence="3">
    <location>
        <position position="191"/>
    </location>
    <ligand>
        <name>NADP(+)</name>
        <dbReference type="ChEBI" id="CHEBI:58349"/>
    </ligand>
</feature>
<feature type="binding site" evidence="2">
    <location>
        <position position="193"/>
    </location>
    <ligand>
        <name>NADP(+)</name>
        <dbReference type="ChEBI" id="CHEBI:58349"/>
    </ligand>
</feature>
<reference key="1">
    <citation type="journal article" date="2002" name="Nature">
        <title>The genome sequence of Schizosaccharomyces pombe.</title>
        <authorList>
            <person name="Wood V."/>
            <person name="Gwilliam R."/>
            <person name="Rajandream M.A."/>
            <person name="Lyne M.H."/>
            <person name="Lyne R."/>
            <person name="Stewart A."/>
            <person name="Sgouros J.G."/>
            <person name="Peat N."/>
            <person name="Hayles J."/>
            <person name="Baker S.G."/>
            <person name="Basham D."/>
            <person name="Bowman S."/>
            <person name="Brooks K."/>
            <person name="Brown D."/>
            <person name="Brown S."/>
            <person name="Chillingworth T."/>
            <person name="Churcher C.M."/>
            <person name="Collins M."/>
            <person name="Connor R."/>
            <person name="Cronin A."/>
            <person name="Davis P."/>
            <person name="Feltwell T."/>
            <person name="Fraser A."/>
            <person name="Gentles S."/>
            <person name="Goble A."/>
            <person name="Hamlin N."/>
            <person name="Harris D.E."/>
            <person name="Hidalgo J."/>
            <person name="Hodgson G."/>
            <person name="Holroyd S."/>
            <person name="Hornsby T."/>
            <person name="Howarth S."/>
            <person name="Huckle E.J."/>
            <person name="Hunt S."/>
            <person name="Jagels K."/>
            <person name="James K.D."/>
            <person name="Jones L."/>
            <person name="Jones M."/>
            <person name="Leather S."/>
            <person name="McDonald S."/>
            <person name="McLean J."/>
            <person name="Mooney P."/>
            <person name="Moule S."/>
            <person name="Mungall K.L."/>
            <person name="Murphy L.D."/>
            <person name="Niblett D."/>
            <person name="Odell C."/>
            <person name="Oliver K."/>
            <person name="O'Neil S."/>
            <person name="Pearson D."/>
            <person name="Quail M.A."/>
            <person name="Rabbinowitsch E."/>
            <person name="Rutherford K.M."/>
            <person name="Rutter S."/>
            <person name="Saunders D."/>
            <person name="Seeger K."/>
            <person name="Sharp S."/>
            <person name="Skelton J."/>
            <person name="Simmonds M.N."/>
            <person name="Squares R."/>
            <person name="Squares S."/>
            <person name="Stevens K."/>
            <person name="Taylor K."/>
            <person name="Taylor R.G."/>
            <person name="Tivey A."/>
            <person name="Walsh S.V."/>
            <person name="Warren T."/>
            <person name="Whitehead S."/>
            <person name="Woodward J.R."/>
            <person name="Volckaert G."/>
            <person name="Aert R."/>
            <person name="Robben J."/>
            <person name="Grymonprez B."/>
            <person name="Weltjens I."/>
            <person name="Vanstreels E."/>
            <person name="Rieger M."/>
            <person name="Schaefer M."/>
            <person name="Mueller-Auer S."/>
            <person name="Gabel C."/>
            <person name="Fuchs M."/>
            <person name="Duesterhoeft A."/>
            <person name="Fritzc C."/>
            <person name="Holzer E."/>
            <person name="Moestl D."/>
            <person name="Hilbert H."/>
            <person name="Borzym K."/>
            <person name="Langer I."/>
            <person name="Beck A."/>
            <person name="Lehrach H."/>
            <person name="Reinhardt R."/>
            <person name="Pohl T.M."/>
            <person name="Eger P."/>
            <person name="Zimmermann W."/>
            <person name="Wedler H."/>
            <person name="Wambutt R."/>
            <person name="Purnelle B."/>
            <person name="Goffeau A."/>
            <person name="Cadieu E."/>
            <person name="Dreano S."/>
            <person name="Gloux S."/>
            <person name="Lelaure V."/>
            <person name="Mottier S."/>
            <person name="Galibert F."/>
            <person name="Aves S.J."/>
            <person name="Xiang Z."/>
            <person name="Hunt C."/>
            <person name="Moore K."/>
            <person name="Hurst S.M."/>
            <person name="Lucas M."/>
            <person name="Rochet M."/>
            <person name="Gaillardin C."/>
            <person name="Tallada V.A."/>
            <person name="Garzon A."/>
            <person name="Thode G."/>
            <person name="Daga R.R."/>
            <person name="Cruzado L."/>
            <person name="Jimenez J."/>
            <person name="Sanchez M."/>
            <person name="del Rey F."/>
            <person name="Benito J."/>
            <person name="Dominguez A."/>
            <person name="Revuelta J.L."/>
            <person name="Moreno S."/>
            <person name="Armstrong J."/>
            <person name="Forsburg S.L."/>
            <person name="Cerutti L."/>
            <person name="Lowe T."/>
            <person name="McCombie W.R."/>
            <person name="Paulsen I."/>
            <person name="Potashkin J."/>
            <person name="Shpakovski G.V."/>
            <person name="Ussery D."/>
            <person name="Barrell B.G."/>
            <person name="Nurse P."/>
        </authorList>
    </citation>
    <scope>NUCLEOTIDE SEQUENCE [LARGE SCALE GENOMIC DNA]</scope>
    <source>
        <strain>972 / ATCC 24843</strain>
    </source>
</reference>
<reference key="2">
    <citation type="journal article" date="2006" name="Nat. Biotechnol.">
        <title>ORFeome cloning and global analysis of protein localization in the fission yeast Schizosaccharomyces pombe.</title>
        <authorList>
            <person name="Matsuyama A."/>
            <person name="Arai R."/>
            <person name="Yashiroda Y."/>
            <person name="Shirai A."/>
            <person name="Kamata A."/>
            <person name="Sekido S."/>
            <person name="Kobayashi Y."/>
            <person name="Hashimoto A."/>
            <person name="Hamamoto M."/>
            <person name="Hiraoka Y."/>
            <person name="Horinouchi S."/>
            <person name="Yoshida M."/>
        </authorList>
    </citation>
    <scope>SUBCELLULAR LOCATION [LARGE SCALE ANALYSIS]</scope>
</reference>
<keyword id="KW-0963">Cytoplasm</keyword>
<keyword id="KW-0521">NADP</keyword>
<keyword id="KW-0539">Nucleus</keyword>
<keyword id="KW-0560">Oxidoreductase</keyword>
<keyword id="KW-1185">Reference proteome</keyword>
<sequence length="253" mass="27947">MATTNKVYFIAGGNRGIGLSLVKELSSREGTTVFASARKPEAATELQEWSKSHPNVKTVELDVTSQQSANEAAQSVAKAVDGIDVLWLNSGICQSYYTVMEAPEEVWNAHYQTNVLGPIHVFKAFYPLLTKKKTRQVIFTSSECGSMGDFRATGFSAYGQSKAAINFTMKELSVELADEHFTFISIHPGVVKTDMNADAIKKFTETSPEMLTYLKKVTIIPEESVSSMLKVVDNLKPENNGSFYRYDGTIIPF</sequence>
<organism>
    <name type="scientific">Schizosaccharomyces pombe (strain 972 / ATCC 24843)</name>
    <name type="common">Fission yeast</name>
    <dbReference type="NCBI Taxonomy" id="284812"/>
    <lineage>
        <taxon>Eukaryota</taxon>
        <taxon>Fungi</taxon>
        <taxon>Dikarya</taxon>
        <taxon>Ascomycota</taxon>
        <taxon>Taphrinomycotina</taxon>
        <taxon>Schizosaccharomycetes</taxon>
        <taxon>Schizosaccharomycetales</taxon>
        <taxon>Schizosaccharomycetaceae</taxon>
        <taxon>Schizosaccharomyces</taxon>
    </lineage>
</organism>
<comment type="subcellular location">
    <subcellularLocation>
        <location evidence="4">Cytoplasm</location>
    </subcellularLocation>
    <subcellularLocation>
        <location evidence="4">Nucleus</location>
    </subcellularLocation>
</comment>
<comment type="similarity">
    <text evidence="5">Belongs to the short-chain dehydrogenases/reductases (SDR) family.</text>
</comment>
<gene>
    <name type="ORF">SPCC663.09c</name>
</gene>
<protein>
    <recommendedName>
        <fullName>Uncharacterized oxidoreductase C663.09c</fullName>
        <ecNumber>1.-.-.-</ecNumber>
    </recommendedName>
</protein>
<proteinExistence type="inferred from homology"/>
<evidence type="ECO:0000250" key="1"/>
<evidence type="ECO:0000250" key="2">
    <source>
        <dbReference type="UniProtKB" id="L0E2Z4"/>
    </source>
</evidence>
<evidence type="ECO:0000250" key="3">
    <source>
        <dbReference type="UniProtKB" id="O93868"/>
    </source>
</evidence>
<evidence type="ECO:0000269" key="4">
    <source>
    </source>
</evidence>
<evidence type="ECO:0000305" key="5"/>